<sequence>MEGVLYKWTNYLSGWQPRWFLLCGGILSYYDSPEDAWKGCKGSIQMAVCEIQVHSVDNTRMDLIIPGEQYFYLKARSVAERQRWLVALGSAKACLTDSRTQKEKEFAENTENLKTKMSELRLYCDLLVQQVDKTKEVTTTGVSNSEEGIDVGTLLKSTCNTFLKTLEECMQIANAAFTSELLYRTPPGSPQLAMLKSSKMKHPIIPIHNSLERQMELSTCENGSLNMEINGEEEILMKNKNSLYLKSAEIDCSISSEENTDDNITVQGEIRKEDGMENLKNHDNNLTQSGSDSSCSPECLWEEGKEVIPTFFSTMNTSFSDIELLEDSGIPTEAFLASCYAVVPVLDKLGPTVFAPVKMDLVGNIKKVNQKYITNKEEFTTLQKIVLHEVEADVAQVRNSATEALLWLKRGLKFLKGFLTEVKNGEKDIQTALNNAYGKTLRQHHGWVVRGVFALALRAAPSYEDFVAALTVKEGDHQKEAFSIGMQRDLSLYLPAMEKQLAILDTLYEVHGLESDEVV</sequence>
<name>PKHA8_HUMAN</name>
<dbReference type="EMBL" id="AF380162">
    <property type="protein sequence ID" value="AAK55424.1"/>
    <property type="status" value="ALT_SEQ"/>
    <property type="molecule type" value="mRNA"/>
</dbReference>
<dbReference type="EMBL" id="AK023180">
    <property type="protein sequence ID" value="BAB14449.1"/>
    <property type="molecule type" value="mRNA"/>
</dbReference>
<dbReference type="EMBL" id="AK294857">
    <property type="protein sequence ID" value="BAG57961.1"/>
    <property type="molecule type" value="mRNA"/>
</dbReference>
<dbReference type="EMBL" id="CH471073">
    <property type="protein sequence ID" value="EAW93930.1"/>
    <property type="molecule type" value="Genomic_DNA"/>
</dbReference>
<dbReference type="EMBL" id="BC002838">
    <property type="protein sequence ID" value="AAH02838.1"/>
    <property type="molecule type" value="mRNA"/>
</dbReference>
<dbReference type="EMBL" id="BC053990">
    <property type="protein sequence ID" value="AAH53990.1"/>
    <property type="molecule type" value="mRNA"/>
</dbReference>
<dbReference type="EMBL" id="AF308300">
    <property type="protein sequence ID" value="AAG48267.1"/>
    <property type="status" value="ALT_INIT"/>
    <property type="molecule type" value="mRNA"/>
</dbReference>
<dbReference type="CCDS" id="CCDS5424.1">
    <molecule id="Q96JA3-3"/>
</dbReference>
<dbReference type="CCDS" id="CCDS56473.1">
    <molecule id="Q96JA3-1"/>
</dbReference>
<dbReference type="CCDS" id="CCDS87489.1">
    <molecule id="Q96JA3-2"/>
</dbReference>
<dbReference type="RefSeq" id="NP_001183955.1">
    <molecule id="Q96JA3-1"/>
    <property type="nucleotide sequence ID" value="NM_001197026.2"/>
</dbReference>
<dbReference type="RefSeq" id="NP_001183956.1">
    <property type="nucleotide sequence ID" value="NM_001197027.1"/>
</dbReference>
<dbReference type="RefSeq" id="NP_001337902.1">
    <molecule id="Q96JA3-2"/>
    <property type="nucleotide sequence ID" value="NM_001350973.2"/>
</dbReference>
<dbReference type="RefSeq" id="NP_116028.1">
    <molecule id="Q96JA3-3"/>
    <property type="nucleotide sequence ID" value="NM_032639.4"/>
</dbReference>
<dbReference type="RefSeq" id="XP_011513896.1">
    <property type="nucleotide sequence ID" value="XM_011515594.1"/>
</dbReference>
<dbReference type="PDB" id="5KDI">
    <property type="method" value="X-ray"/>
    <property type="resolution" value="1.45 A"/>
    <property type="chains" value="A/B=309-519"/>
</dbReference>
<dbReference type="PDBsum" id="5KDI"/>
<dbReference type="SMR" id="Q96JA3"/>
<dbReference type="BioGRID" id="124225">
    <property type="interactions" value="18"/>
</dbReference>
<dbReference type="FunCoup" id="Q96JA3">
    <property type="interactions" value="2353"/>
</dbReference>
<dbReference type="IntAct" id="Q96JA3">
    <property type="interactions" value="8"/>
</dbReference>
<dbReference type="STRING" id="9606.ENSP00000397947"/>
<dbReference type="iPTMnet" id="Q96JA3"/>
<dbReference type="PhosphoSitePlus" id="Q96JA3"/>
<dbReference type="BioMuta" id="PLEKHA8"/>
<dbReference type="DMDM" id="387912902"/>
<dbReference type="jPOST" id="Q96JA3"/>
<dbReference type="MassIVE" id="Q96JA3"/>
<dbReference type="PaxDb" id="9606-ENSP00000397947"/>
<dbReference type="PeptideAtlas" id="Q96JA3"/>
<dbReference type="ProteomicsDB" id="76918">
    <molecule id="Q96JA3-1"/>
</dbReference>
<dbReference type="ProteomicsDB" id="76919">
    <molecule id="Q96JA3-2"/>
</dbReference>
<dbReference type="ProteomicsDB" id="76920">
    <molecule id="Q96JA3-3"/>
</dbReference>
<dbReference type="Pumba" id="Q96JA3"/>
<dbReference type="Antibodypedia" id="26151">
    <property type="antibodies" value="166 antibodies from 28 providers"/>
</dbReference>
<dbReference type="DNASU" id="84725"/>
<dbReference type="Ensembl" id="ENST00000258679.11">
    <molecule id="Q96JA3-3"/>
    <property type="protein sequence ID" value="ENSP00000258679.7"/>
    <property type="gene ID" value="ENSG00000106086.21"/>
</dbReference>
<dbReference type="Ensembl" id="ENST00000396257.6">
    <molecule id="Q96JA3-2"/>
    <property type="protein sequence ID" value="ENSP00000379556.2"/>
    <property type="gene ID" value="ENSG00000106086.21"/>
</dbReference>
<dbReference type="Ensembl" id="ENST00000440706.3">
    <molecule id="Q96JA3-1"/>
    <property type="protein sequence ID" value="ENSP00000407802.2"/>
    <property type="gene ID" value="ENSG00000106086.21"/>
</dbReference>
<dbReference type="Ensembl" id="ENST00000449726.6">
    <molecule id="Q96JA3-1"/>
    <property type="protein sequence ID" value="ENSP00000397947.1"/>
    <property type="gene ID" value="ENSG00000106086.21"/>
</dbReference>
<dbReference type="GeneID" id="84725"/>
<dbReference type="KEGG" id="hsa:84725"/>
<dbReference type="MANE-Select" id="ENST00000449726.6">
    <property type="protein sequence ID" value="ENSP00000397947.1"/>
    <property type="RefSeq nucleotide sequence ID" value="NM_001197026.2"/>
    <property type="RefSeq protein sequence ID" value="NP_001183955.1"/>
</dbReference>
<dbReference type="UCSC" id="uc003tan.4">
    <molecule id="Q96JA3-1"/>
    <property type="organism name" value="human"/>
</dbReference>
<dbReference type="AGR" id="HGNC:30037"/>
<dbReference type="CTD" id="84725"/>
<dbReference type="DisGeNET" id="84725"/>
<dbReference type="GeneCards" id="PLEKHA8"/>
<dbReference type="HGNC" id="HGNC:30037">
    <property type="gene designation" value="PLEKHA8"/>
</dbReference>
<dbReference type="HPA" id="ENSG00000106086">
    <property type="expression patterns" value="Low tissue specificity"/>
</dbReference>
<dbReference type="MIM" id="608639">
    <property type="type" value="gene"/>
</dbReference>
<dbReference type="neXtProt" id="NX_Q96JA3"/>
<dbReference type="OpenTargets" id="ENSG00000106086"/>
<dbReference type="PharmGKB" id="PA134926954"/>
<dbReference type="VEuPathDB" id="HostDB:ENSG00000106086"/>
<dbReference type="eggNOG" id="KOG3221">
    <property type="taxonomic scope" value="Eukaryota"/>
</dbReference>
<dbReference type="GeneTree" id="ENSGT00940000157288"/>
<dbReference type="HOGENOM" id="CLU_039839_0_0_1"/>
<dbReference type="InParanoid" id="Q96JA3"/>
<dbReference type="OMA" id="ERQMEMN"/>
<dbReference type="OrthoDB" id="1854502at2759"/>
<dbReference type="PAN-GO" id="Q96JA3">
    <property type="GO annotations" value="5 GO annotations based on evolutionary models"/>
</dbReference>
<dbReference type="TreeFam" id="TF317467"/>
<dbReference type="PathwayCommons" id="Q96JA3"/>
<dbReference type="Reactome" id="R-HSA-1660499">
    <property type="pathway name" value="Synthesis of PIPs at the plasma membrane"/>
</dbReference>
<dbReference type="Reactome" id="R-HSA-9845576">
    <property type="pathway name" value="Glycosphingolipid transport"/>
</dbReference>
<dbReference type="SignaLink" id="Q96JA3"/>
<dbReference type="BioGRID-ORCS" id="84725">
    <property type="hits" value="19 hits in 1122 CRISPR screens"/>
</dbReference>
<dbReference type="ChiTaRS" id="PLEKHA8">
    <property type="organism name" value="human"/>
</dbReference>
<dbReference type="GenomeRNAi" id="84725"/>
<dbReference type="Pharos" id="Q96JA3">
    <property type="development level" value="Tbio"/>
</dbReference>
<dbReference type="PRO" id="PR:Q96JA3"/>
<dbReference type="Proteomes" id="UP000005640">
    <property type="component" value="Chromosome 7"/>
</dbReference>
<dbReference type="RNAct" id="Q96JA3">
    <property type="molecule type" value="protein"/>
</dbReference>
<dbReference type="Bgee" id="ENSG00000106086">
    <property type="expression patterns" value="Expressed in ventricular zone and 166 other cell types or tissues"/>
</dbReference>
<dbReference type="ExpressionAtlas" id="Q96JA3">
    <property type="expression patterns" value="baseline and differential"/>
</dbReference>
<dbReference type="GO" id="GO:0005829">
    <property type="term" value="C:cytosol"/>
    <property type="evidence" value="ECO:0000318"/>
    <property type="project" value="GO_Central"/>
</dbReference>
<dbReference type="GO" id="GO:0005794">
    <property type="term" value="C:Golgi apparatus"/>
    <property type="evidence" value="ECO:0000314"/>
    <property type="project" value="HPA"/>
</dbReference>
<dbReference type="GO" id="GO:0000139">
    <property type="term" value="C:Golgi membrane"/>
    <property type="evidence" value="ECO:0000304"/>
    <property type="project" value="Reactome"/>
</dbReference>
<dbReference type="GO" id="GO:0005654">
    <property type="term" value="C:nucleoplasm"/>
    <property type="evidence" value="ECO:0000314"/>
    <property type="project" value="HPA"/>
</dbReference>
<dbReference type="GO" id="GO:0005802">
    <property type="term" value="C:trans-Golgi network"/>
    <property type="evidence" value="ECO:0000314"/>
    <property type="project" value="UniProtKB"/>
</dbReference>
<dbReference type="GO" id="GO:1902387">
    <property type="term" value="F:ceramide 1-phosphate binding"/>
    <property type="evidence" value="ECO:0000318"/>
    <property type="project" value="GO_Central"/>
</dbReference>
<dbReference type="GO" id="GO:1902388">
    <property type="term" value="F:ceramide 1-phosphate transfer activity"/>
    <property type="evidence" value="ECO:0000318"/>
    <property type="project" value="GO_Central"/>
</dbReference>
<dbReference type="GO" id="GO:0097001">
    <property type="term" value="F:ceramide binding"/>
    <property type="evidence" value="ECO:0000314"/>
    <property type="project" value="UniProtKB"/>
</dbReference>
<dbReference type="GO" id="GO:0051861">
    <property type="term" value="F:glycolipid binding"/>
    <property type="evidence" value="ECO:0000314"/>
    <property type="project" value="UniProtKB"/>
</dbReference>
<dbReference type="GO" id="GO:0017089">
    <property type="term" value="F:glycolipid transfer activity"/>
    <property type="evidence" value="ECO:0000314"/>
    <property type="project" value="UniProtKB"/>
</dbReference>
<dbReference type="GO" id="GO:0070273">
    <property type="term" value="F:phosphatidylinositol-4-phosphate binding"/>
    <property type="evidence" value="ECO:0000314"/>
    <property type="project" value="UniProtKB"/>
</dbReference>
<dbReference type="GO" id="GO:0035627">
    <property type="term" value="P:ceramide transport"/>
    <property type="evidence" value="ECO:0000318"/>
    <property type="project" value="GO_Central"/>
</dbReference>
<dbReference type="GO" id="GO:0035621">
    <property type="term" value="P:ER to Golgi ceramide transport"/>
    <property type="evidence" value="ECO:0000314"/>
    <property type="project" value="UniProtKB"/>
</dbReference>
<dbReference type="GO" id="GO:0120009">
    <property type="term" value="P:intermembrane lipid transfer"/>
    <property type="evidence" value="ECO:0000318"/>
    <property type="project" value="GO_Central"/>
</dbReference>
<dbReference type="GO" id="GO:0006869">
    <property type="term" value="P:lipid transport"/>
    <property type="evidence" value="ECO:0000314"/>
    <property type="project" value="UniProtKB"/>
</dbReference>
<dbReference type="GO" id="GO:0015031">
    <property type="term" value="P:protein transport"/>
    <property type="evidence" value="ECO:0007669"/>
    <property type="project" value="UniProtKB-KW"/>
</dbReference>
<dbReference type="CDD" id="cd01247">
    <property type="entry name" value="PH_FAPP1_FAPP2"/>
    <property type="match status" value="1"/>
</dbReference>
<dbReference type="FunFam" id="1.10.3520.10:FF:000001">
    <property type="entry name" value="Pleckstrin domain-containing family A member 8"/>
    <property type="match status" value="1"/>
</dbReference>
<dbReference type="FunFam" id="2.30.29.30:FF:000085">
    <property type="entry name" value="Pleckstrin homology domain-containing family A member 8"/>
    <property type="match status" value="1"/>
</dbReference>
<dbReference type="Gene3D" id="1.10.3520.10">
    <property type="entry name" value="Glycolipid transfer protein"/>
    <property type="match status" value="1"/>
</dbReference>
<dbReference type="Gene3D" id="2.30.29.30">
    <property type="entry name" value="Pleckstrin-homology domain (PH domain)/Phosphotyrosine-binding domain (PTB)"/>
    <property type="match status" value="1"/>
</dbReference>
<dbReference type="InterPro" id="IPR036497">
    <property type="entry name" value="GLTP_sf"/>
</dbReference>
<dbReference type="InterPro" id="IPR014830">
    <property type="entry name" value="Glycolipid_transfer_prot_dom"/>
</dbReference>
<dbReference type="InterPro" id="IPR011993">
    <property type="entry name" value="PH-like_dom_sf"/>
</dbReference>
<dbReference type="InterPro" id="IPR001849">
    <property type="entry name" value="PH_domain"/>
</dbReference>
<dbReference type="PANTHER" id="PTHR10219">
    <property type="entry name" value="GLYCOLIPID TRANSFER PROTEIN-RELATED"/>
    <property type="match status" value="1"/>
</dbReference>
<dbReference type="PANTHER" id="PTHR10219:SF25">
    <property type="entry name" value="PLECKSTRIN HOMOLOGY DOMAIN-CONTAINING FAMILY A MEMBER 8"/>
    <property type="match status" value="1"/>
</dbReference>
<dbReference type="Pfam" id="PF08718">
    <property type="entry name" value="GLTP"/>
    <property type="match status" value="1"/>
</dbReference>
<dbReference type="Pfam" id="PF00169">
    <property type="entry name" value="PH"/>
    <property type="match status" value="1"/>
</dbReference>
<dbReference type="SMART" id="SM00233">
    <property type="entry name" value="PH"/>
    <property type="match status" value="1"/>
</dbReference>
<dbReference type="SUPFAM" id="SSF110004">
    <property type="entry name" value="Glycolipid transfer protein, GLTP"/>
    <property type="match status" value="1"/>
</dbReference>
<dbReference type="SUPFAM" id="SSF50729">
    <property type="entry name" value="PH domain-like"/>
    <property type="match status" value="1"/>
</dbReference>
<dbReference type="PROSITE" id="PS50003">
    <property type="entry name" value="PH_DOMAIN"/>
    <property type="match status" value="1"/>
</dbReference>
<comment type="function">
    <text evidence="4 5 7">Cargo transport protein that is required for apical transport from the Golgi complex. Transports AQP2 from the trans-Golgi network (TGN) to sites of AQP2 phosphorylation. Mediates the non-vesicular transport of glucosylceramide (GlcCer) from the trans-Golgi network (TGN) to the plasma membrane and plays a pivotal role in the synthesis of complex glycosphingolipids. Binding of both phosphatidylinositol 4-phosphate (PIP) and ARF1 are essential for the GlcCer transfer ability. Also required for primary cilium formation, possibly by being involved in the transport of raft lipids to the apical membrane, and for membrane tubulation.</text>
</comment>
<comment type="subunit">
    <text evidence="1 4">Homodimer (By similarity). Interacts with ARF1; the interaction together with phosphatidylinositol 4-phosphate binding is required for FAPP2 GlcCer transfer ability.</text>
</comment>
<comment type="interaction">
    <interactant intactId="EBI-11032488">
        <id>Q96JA3</id>
    </interactant>
    <interactant intactId="EBI-21815030">
        <id>O95397</id>
        <label>PLEKHA8P1</label>
    </interactant>
    <organismsDiffer>false</organismsDiffer>
    <experiments>2</experiments>
</comment>
<comment type="subcellular location">
    <subcellularLocation>
        <location evidence="4">Golgi apparatus</location>
        <location evidence="4">trans-Golgi network membrane</location>
    </subcellularLocation>
    <subcellularLocation>
        <location>Membrane</location>
        <topology evidence="4">Peripheral membrane protein</topology>
    </subcellularLocation>
    <text evidence="4">Binds through its PH domain to PtdIns(4)P and ARF1, and subsequently localizes to TGN exit sites.</text>
</comment>
<comment type="alternative products">
    <event type="alternative splicing"/>
    <isoform>
        <id>Q96JA3-1</id>
        <name>1</name>
        <sequence type="displayed"/>
    </isoform>
    <isoform>
        <id>Q96JA3-2</id>
        <name>2</name>
        <sequence type="described" ref="VSP_028545 VSP_028546"/>
    </isoform>
    <isoform>
        <id>Q96JA3-3</id>
        <name>3</name>
        <sequence type="described" ref="VSP_028543 VSP_028544"/>
    </isoform>
</comment>
<comment type="tissue specificity">
    <text evidence="4">Expressed in kidney cell lines.</text>
</comment>
<comment type="domain">
    <text evidence="4">The PH domain of FAPPS binds the small GTPase ARF1 and phosphatidylinositol-4-phosphate (PtdIns4P) with high selectivity, and is required for recruitment of FAPPs to the trans-Golgi network (TGN).</text>
</comment>
<comment type="sequence caution" evidence="9">
    <conflict type="erroneous initiation">
        <sequence resource="EMBL-CDS" id="AAG48267"/>
    </conflict>
    <text>Extended N-terminus.</text>
</comment>
<comment type="sequence caution" evidence="9">
    <conflict type="erroneous termination">
        <sequence resource="EMBL-CDS" id="AAK55424"/>
    </conflict>
    <text>Truncated C-terminus.</text>
</comment>
<proteinExistence type="evidence at protein level"/>
<evidence type="ECO:0000250" key="1"/>
<evidence type="ECO:0000250" key="2">
    <source>
        <dbReference type="UniProtKB" id="D3ZY60"/>
    </source>
</evidence>
<evidence type="ECO:0000255" key="3">
    <source>
        <dbReference type="PROSITE-ProRule" id="PRU00145"/>
    </source>
</evidence>
<evidence type="ECO:0000269" key="4">
    <source>
    </source>
</evidence>
<evidence type="ECO:0000269" key="5">
    <source>
    </source>
</evidence>
<evidence type="ECO:0000269" key="6">
    <source>
    </source>
</evidence>
<evidence type="ECO:0000269" key="7">
    <source>
    </source>
</evidence>
<evidence type="ECO:0000303" key="8">
    <source>
    </source>
</evidence>
<evidence type="ECO:0000305" key="9"/>
<evidence type="ECO:0007829" key="10">
    <source>
        <dbReference type="PDB" id="5KDI"/>
    </source>
</evidence>
<gene>
    <name type="primary">PLEKHA8</name>
    <name type="synonym">FAPP2</name>
</gene>
<organism>
    <name type="scientific">Homo sapiens</name>
    <name type="common">Human</name>
    <dbReference type="NCBI Taxonomy" id="9606"/>
    <lineage>
        <taxon>Eukaryota</taxon>
        <taxon>Metazoa</taxon>
        <taxon>Chordata</taxon>
        <taxon>Craniata</taxon>
        <taxon>Vertebrata</taxon>
        <taxon>Euteleostomi</taxon>
        <taxon>Mammalia</taxon>
        <taxon>Eutheria</taxon>
        <taxon>Euarchontoglires</taxon>
        <taxon>Primates</taxon>
        <taxon>Haplorrhini</taxon>
        <taxon>Catarrhini</taxon>
        <taxon>Hominidae</taxon>
        <taxon>Homo</taxon>
    </lineage>
</organism>
<accession>Q96JA3</accession>
<accession>B4DH00</accession>
<accession>Q7Z5V8</accession>
<accession>Q9BU78</accession>
<accession>Q9H274</accession>
<accession>Q9H8Z7</accession>
<feature type="chain" id="PRO_0000306865" description="Pleckstrin homology domain-containing family A member 8">
    <location>
        <begin position="1"/>
        <end position="519"/>
    </location>
</feature>
<feature type="domain" description="PH" evidence="3">
    <location>
        <begin position="1"/>
        <end position="93"/>
    </location>
</feature>
<feature type="region of interest" description="Glycolipid transfer protein homology domain">
    <location>
        <begin position="310"/>
        <end position="519"/>
    </location>
</feature>
<feature type="modified residue" description="Phosphothreonine" evidence="2">
    <location>
        <position position="139"/>
    </location>
</feature>
<feature type="modified residue" description="Phosphoserine" evidence="2">
    <location>
        <position position="145"/>
    </location>
</feature>
<feature type="modified residue" description="Phosphothreonine" evidence="2">
    <location>
        <position position="153"/>
    </location>
</feature>
<feature type="splice variant" id="VSP_028543" description="In isoform 3." evidence="8">
    <original>NNAYGK</original>
    <variation>RNPTEN</variation>
    <location>
        <begin position="434"/>
        <end position="439"/>
    </location>
</feature>
<feature type="splice variant" id="VSP_028544" description="In isoform 3." evidence="8">
    <location>
        <begin position="441"/>
        <end position="519"/>
    </location>
</feature>
<feature type="splice variant" id="VSP_028545" description="In isoform 2." evidence="8">
    <original>L</original>
    <variation>V</variation>
    <location>
        <position position="455"/>
    </location>
</feature>
<feature type="splice variant" id="VSP_028546" description="In isoform 2." evidence="8">
    <location>
        <begin position="456"/>
        <end position="519"/>
    </location>
</feature>
<feature type="sequence variant" id="VAR_035444" description="In a breast cancer sample; somatic mutation." evidence="6">
    <original>V</original>
    <variation>E</variation>
    <location>
        <position position="368"/>
    </location>
</feature>
<feature type="mutagenesis site" description="Abolishes binding to phosphatylinositol 4-phosphate, less association with Golgi and no preference for TGN location." evidence="7">
    <original>R</original>
    <variation>L</variation>
    <location>
        <position position="18"/>
    </location>
</feature>
<feature type="mutagenesis site" description="Loss of glucosylceramide transfer activity from the TGN to the plasma membrane." evidence="7">
    <original>W</original>
    <variation>A</variation>
    <location>
        <position position="407"/>
    </location>
</feature>
<feature type="sequence conflict" description="In Ref. 4; BAB14449." evidence="9" ref="4">
    <original>E</original>
    <variation>G</variation>
    <location>
        <position position="232"/>
    </location>
</feature>
<feature type="sequence conflict" description="In Ref. 1; AAK55424." evidence="9" ref="1">
    <original>T</original>
    <variation>S</variation>
    <location>
        <position position="287"/>
    </location>
</feature>
<feature type="sequence conflict" description="In Ref. 1; AAK55424." evidence="9" ref="1">
    <original>Y</original>
    <variation>C</variation>
    <location>
        <position position="340"/>
    </location>
</feature>
<feature type="sequence conflict" description="In Ref. 5; AAG48267." evidence="9" ref="5">
    <original>MDLVGNI</original>
    <variation>DGSCWKY</variation>
    <location>
        <begin position="359"/>
        <end position="365"/>
    </location>
</feature>
<feature type="sequence conflict" description="In Ref. 1; AAK55424." evidence="9" ref="1">
    <original>G</original>
    <variation>E</variation>
    <location>
        <position position="363"/>
    </location>
</feature>
<feature type="sequence conflict" description="In Ref. 4; BAB14449." evidence="9" ref="4">
    <original>QKY</original>
    <variation>RSI</variation>
    <location>
        <begin position="370"/>
        <end position="372"/>
    </location>
</feature>
<feature type="sequence conflict" description="In Ref. 1; AAK55424." evidence="9" ref="1">
    <original>A</original>
    <variation>T</variation>
    <location>
        <position position="460"/>
    </location>
</feature>
<feature type="sequence conflict" description="In Ref. 1; AAK55424." evidence="9" ref="1">
    <original>Q</original>
    <variation>R</variation>
    <location>
        <position position="478"/>
    </location>
</feature>
<feature type="sequence conflict" description="In Ref. 1; AAK55424." evidence="9" ref="1">
    <original>E</original>
    <variation>K</variation>
    <location>
        <position position="498"/>
    </location>
</feature>
<feature type="sequence conflict" description="In Ref. 1; AAK55424." evidence="9" ref="1">
    <original>L</original>
    <variation>M</variation>
    <location>
        <position position="501"/>
    </location>
</feature>
<feature type="sequence conflict" description="In Ref. 1; AAK55424." evidence="9" ref="1">
    <original>T</original>
    <variation>A</variation>
    <location>
        <position position="506"/>
    </location>
</feature>
<feature type="helix" evidence="10">
    <location>
        <begin position="311"/>
        <end position="313"/>
    </location>
</feature>
<feature type="turn" evidence="10">
    <location>
        <begin position="315"/>
        <end position="317"/>
    </location>
</feature>
<feature type="helix" evidence="10">
    <location>
        <begin position="319"/>
        <end position="321"/>
    </location>
</feature>
<feature type="helix" evidence="10">
    <location>
        <begin position="326"/>
        <end position="328"/>
    </location>
</feature>
<feature type="helix" evidence="10">
    <location>
        <begin position="332"/>
        <end position="340"/>
    </location>
</feature>
<feature type="helix" evidence="10">
    <location>
        <begin position="343"/>
        <end position="349"/>
    </location>
</feature>
<feature type="turn" evidence="10">
    <location>
        <begin position="351"/>
        <end position="354"/>
    </location>
</feature>
<feature type="helix" evidence="10">
    <location>
        <begin position="355"/>
        <end position="372"/>
    </location>
</feature>
<feature type="turn" evidence="10">
    <location>
        <begin position="376"/>
        <end position="378"/>
    </location>
</feature>
<feature type="helix" evidence="10">
    <location>
        <begin position="382"/>
        <end position="391"/>
    </location>
</feature>
<feature type="helix" evidence="10">
    <location>
        <begin position="401"/>
        <end position="423"/>
    </location>
</feature>
<feature type="helix" evidence="10">
    <location>
        <begin position="429"/>
        <end position="439"/>
    </location>
</feature>
<feature type="helix" evidence="10">
    <location>
        <begin position="441"/>
        <end position="444"/>
    </location>
</feature>
<feature type="helix" evidence="10">
    <location>
        <begin position="447"/>
        <end position="458"/>
    </location>
</feature>
<feature type="helix" evidence="10">
    <location>
        <begin position="463"/>
        <end position="468"/>
    </location>
</feature>
<feature type="strand" evidence="10">
    <location>
        <begin position="471"/>
        <end position="473"/>
    </location>
</feature>
<feature type="helix" evidence="10">
    <location>
        <begin position="476"/>
        <end position="478"/>
    </location>
</feature>
<feature type="helix" evidence="10">
    <location>
        <begin position="480"/>
        <end position="510"/>
    </location>
</feature>
<reference key="1">
    <citation type="journal article" date="2000" name="Biochem. J.">
        <title>Identification of pleckstrin-homology-domain-containing proteins with novel phosphoinositide-binding specificities.</title>
        <authorList>
            <person name="Dowler S.J."/>
            <person name="Currie R.A."/>
            <person name="Campbell D.G."/>
            <person name="Deak M."/>
            <person name="Kular G."/>
            <person name="Downes C.P."/>
            <person name="Alessi D.R."/>
        </authorList>
    </citation>
    <scope>NUCLEOTIDE SEQUENCE [MRNA] (ISOFORM 1)</scope>
    <source>
        <tissue>Brain</tissue>
    </source>
</reference>
<reference key="2">
    <citation type="journal article" date="2004" name="Nat. Genet.">
        <title>Complete sequencing and characterization of 21,243 full-length human cDNAs.</title>
        <authorList>
            <person name="Ota T."/>
            <person name="Suzuki Y."/>
            <person name="Nishikawa T."/>
            <person name="Otsuki T."/>
            <person name="Sugiyama T."/>
            <person name="Irie R."/>
            <person name="Wakamatsu A."/>
            <person name="Hayashi K."/>
            <person name="Sato H."/>
            <person name="Nagai K."/>
            <person name="Kimura K."/>
            <person name="Makita H."/>
            <person name="Sekine M."/>
            <person name="Obayashi M."/>
            <person name="Nishi T."/>
            <person name="Shibahara T."/>
            <person name="Tanaka T."/>
            <person name="Ishii S."/>
            <person name="Yamamoto J."/>
            <person name="Saito K."/>
            <person name="Kawai Y."/>
            <person name="Isono Y."/>
            <person name="Nakamura Y."/>
            <person name="Nagahari K."/>
            <person name="Murakami K."/>
            <person name="Yasuda T."/>
            <person name="Iwayanagi T."/>
            <person name="Wagatsuma M."/>
            <person name="Shiratori A."/>
            <person name="Sudo H."/>
            <person name="Hosoiri T."/>
            <person name="Kaku Y."/>
            <person name="Kodaira H."/>
            <person name="Kondo H."/>
            <person name="Sugawara M."/>
            <person name="Takahashi M."/>
            <person name="Kanda K."/>
            <person name="Yokoi T."/>
            <person name="Furuya T."/>
            <person name="Kikkawa E."/>
            <person name="Omura Y."/>
            <person name="Abe K."/>
            <person name="Kamihara K."/>
            <person name="Katsuta N."/>
            <person name="Sato K."/>
            <person name="Tanikawa M."/>
            <person name="Yamazaki M."/>
            <person name="Ninomiya K."/>
            <person name="Ishibashi T."/>
            <person name="Yamashita H."/>
            <person name="Murakawa K."/>
            <person name="Fujimori K."/>
            <person name="Tanai H."/>
            <person name="Kimata M."/>
            <person name="Watanabe M."/>
            <person name="Hiraoka S."/>
            <person name="Chiba Y."/>
            <person name="Ishida S."/>
            <person name="Ono Y."/>
            <person name="Takiguchi S."/>
            <person name="Watanabe S."/>
            <person name="Yosida M."/>
            <person name="Hotuta T."/>
            <person name="Kusano J."/>
            <person name="Kanehori K."/>
            <person name="Takahashi-Fujii A."/>
            <person name="Hara H."/>
            <person name="Tanase T.-O."/>
            <person name="Nomura Y."/>
            <person name="Togiya S."/>
            <person name="Komai F."/>
            <person name="Hara R."/>
            <person name="Takeuchi K."/>
            <person name="Arita M."/>
            <person name="Imose N."/>
            <person name="Musashino K."/>
            <person name="Yuuki H."/>
            <person name="Oshima A."/>
            <person name="Sasaki N."/>
            <person name="Aotsuka S."/>
            <person name="Yoshikawa Y."/>
            <person name="Matsunawa H."/>
            <person name="Ichihara T."/>
            <person name="Shiohata N."/>
            <person name="Sano S."/>
            <person name="Moriya S."/>
            <person name="Momiyama H."/>
            <person name="Satoh N."/>
            <person name="Takami S."/>
            <person name="Terashima Y."/>
            <person name="Suzuki O."/>
            <person name="Nakagawa S."/>
            <person name="Senoh A."/>
            <person name="Mizoguchi H."/>
            <person name="Goto Y."/>
            <person name="Shimizu F."/>
            <person name="Wakebe H."/>
            <person name="Hishigaki H."/>
            <person name="Watanabe T."/>
            <person name="Sugiyama A."/>
            <person name="Takemoto M."/>
            <person name="Kawakami B."/>
            <person name="Yamazaki M."/>
            <person name="Watanabe K."/>
            <person name="Kumagai A."/>
            <person name="Itakura S."/>
            <person name="Fukuzumi Y."/>
            <person name="Fujimori Y."/>
            <person name="Komiyama M."/>
            <person name="Tashiro H."/>
            <person name="Tanigami A."/>
            <person name="Fujiwara T."/>
            <person name="Ono T."/>
            <person name="Yamada K."/>
            <person name="Fujii Y."/>
            <person name="Ozaki K."/>
            <person name="Hirao M."/>
            <person name="Ohmori Y."/>
            <person name="Kawabata A."/>
            <person name="Hikiji T."/>
            <person name="Kobatake N."/>
            <person name="Inagaki H."/>
            <person name="Ikema Y."/>
            <person name="Okamoto S."/>
            <person name="Okitani R."/>
            <person name="Kawakami T."/>
            <person name="Noguchi S."/>
            <person name="Itoh T."/>
            <person name="Shigeta K."/>
            <person name="Senba T."/>
            <person name="Matsumura K."/>
            <person name="Nakajima Y."/>
            <person name="Mizuno T."/>
            <person name="Morinaga M."/>
            <person name="Sasaki M."/>
            <person name="Togashi T."/>
            <person name="Oyama M."/>
            <person name="Hata H."/>
            <person name="Watanabe M."/>
            <person name="Komatsu T."/>
            <person name="Mizushima-Sugano J."/>
            <person name="Satoh T."/>
            <person name="Shirai Y."/>
            <person name="Takahashi Y."/>
            <person name="Nakagawa K."/>
            <person name="Okumura K."/>
            <person name="Nagase T."/>
            <person name="Nomura N."/>
            <person name="Kikuchi H."/>
            <person name="Masuho Y."/>
            <person name="Yamashita R."/>
            <person name="Nakai K."/>
            <person name="Yada T."/>
            <person name="Nakamura Y."/>
            <person name="Ohara O."/>
            <person name="Isogai T."/>
            <person name="Sugano S."/>
        </authorList>
    </citation>
    <scope>NUCLEOTIDE SEQUENCE [LARGE SCALE MRNA] (ISOFORM 1)</scope>
</reference>
<reference key="3">
    <citation type="submission" date="2005-07" db="EMBL/GenBank/DDBJ databases">
        <authorList>
            <person name="Mural R.J."/>
            <person name="Istrail S."/>
            <person name="Sutton G."/>
            <person name="Florea L."/>
            <person name="Halpern A.L."/>
            <person name="Mobarry C.M."/>
            <person name="Lippert R."/>
            <person name="Walenz B."/>
            <person name="Shatkay H."/>
            <person name="Dew I."/>
            <person name="Miller J.R."/>
            <person name="Flanigan M.J."/>
            <person name="Edwards N.J."/>
            <person name="Bolanos R."/>
            <person name="Fasulo D."/>
            <person name="Halldorsson B.V."/>
            <person name="Hannenhalli S."/>
            <person name="Turner R."/>
            <person name="Yooseph S."/>
            <person name="Lu F."/>
            <person name="Nusskern D.R."/>
            <person name="Shue B.C."/>
            <person name="Zheng X.H."/>
            <person name="Zhong F."/>
            <person name="Delcher A.L."/>
            <person name="Huson D.H."/>
            <person name="Kravitz S.A."/>
            <person name="Mouchard L."/>
            <person name="Reinert K."/>
            <person name="Remington K.A."/>
            <person name="Clark A.G."/>
            <person name="Waterman M.S."/>
            <person name="Eichler E.E."/>
            <person name="Adams M.D."/>
            <person name="Hunkapiller M.W."/>
            <person name="Myers E.W."/>
            <person name="Venter J.C."/>
        </authorList>
    </citation>
    <scope>NUCLEOTIDE SEQUENCE [LARGE SCALE GENOMIC DNA]</scope>
</reference>
<reference key="4">
    <citation type="journal article" date="2004" name="Genome Res.">
        <title>The status, quality, and expansion of the NIH full-length cDNA project: the Mammalian Gene Collection (MGC).</title>
        <authorList>
            <consortium name="The MGC Project Team"/>
        </authorList>
    </citation>
    <scope>NUCLEOTIDE SEQUENCE [LARGE SCALE MRNA] (ISOFORMS 2 AND 3)</scope>
    <source>
        <tissue>Brain</tissue>
        <tissue>Placenta</tissue>
    </source>
</reference>
<reference key="5">
    <citation type="journal article" date="2001" name="Cancer Immun.">
        <title>Humoral immunity to human breast cancer: antigen definition and quantitative analysis of mRNA expression.</title>
        <authorList>
            <person name="Scanlan M.J."/>
            <person name="Gout I."/>
            <person name="Gordon C.M."/>
            <person name="Williamson B."/>
            <person name="Stockert E."/>
            <person name="Gure A.O."/>
            <person name="Jaeger D."/>
            <person name="Chen Y.-T."/>
            <person name="Mackay A."/>
            <person name="O'Hare M.J."/>
            <person name="Old L.J."/>
        </authorList>
    </citation>
    <scope>NUCLEOTIDE SEQUENCE [MRNA] OF 1-365</scope>
    <source>
        <tissue>Mammary gland</tissue>
    </source>
</reference>
<reference key="6">
    <citation type="journal article" date="2004" name="Nat. Cell Biol.">
        <title>FAPPs control Golgi-to-cell-surface membrane traffic by binding to ARF and PtdIns(4)P.</title>
        <authorList>
            <person name="Godi A."/>
            <person name="Di Campli A."/>
            <person name="Konstantakopoulos A."/>
            <person name="Di Tullio G."/>
            <person name="Alessi D.R."/>
            <person name="Kular G.S."/>
            <person name="Daniele T."/>
            <person name="Marra P."/>
            <person name="Lucocq J.M."/>
            <person name="De Matteis M.A."/>
        </authorList>
    </citation>
    <scope>SUBCELLULAR LOCATION</scope>
    <scope>INTERACTION WITH ARF1</scope>
    <scope>DOMAIN</scope>
    <scope>PHOSPHOLIPID-BINDING</scope>
    <scope>FUNCTION</scope>
    <scope>TISSUE SPECIFICITY</scope>
</reference>
<reference key="7">
    <citation type="journal article" date="2005" name="J. Cell Biol.">
        <title>FAPP2 is involved in the transport of apical cargo in polarized MDCK cells.</title>
        <authorList>
            <person name="Vieira O.V."/>
            <person name="Verkade P."/>
            <person name="Manninen A."/>
            <person name="Simons K."/>
        </authorList>
    </citation>
    <scope>FUNCTION</scope>
</reference>
<reference key="8">
    <citation type="journal article" date="2007" name="Nature">
        <title>Glycosphingolipid synthesis requires FAPP2 transfer of glucosylceramide.</title>
        <authorList>
            <person name="D'Angelo G."/>
            <person name="Polishchuk E."/>
            <person name="Di Tullio G."/>
            <person name="Santoro M."/>
            <person name="Di Campli A."/>
            <person name="Godi A."/>
            <person name="West G."/>
            <person name="Bielawski J."/>
            <person name="Chuang C.C."/>
            <person name="van der Spoel A.C."/>
            <person name="Platt F.M."/>
            <person name="Hannun Y.A."/>
            <person name="Polishchuk R."/>
            <person name="Mattjus P."/>
            <person name="De Matteis M.A."/>
        </authorList>
    </citation>
    <scope>FUNCTION</scope>
    <scope>MUTAGENESIS OF ARG-18 AND TRP-407</scope>
</reference>
<reference key="9">
    <citation type="journal article" date="2006" name="Science">
        <title>The consensus coding sequences of human breast and colorectal cancers.</title>
        <authorList>
            <person name="Sjoeblom T."/>
            <person name="Jones S."/>
            <person name="Wood L.D."/>
            <person name="Parsons D.W."/>
            <person name="Lin J."/>
            <person name="Barber T.D."/>
            <person name="Mandelker D."/>
            <person name="Leary R.J."/>
            <person name="Ptak J."/>
            <person name="Silliman N."/>
            <person name="Szabo S."/>
            <person name="Buckhaults P."/>
            <person name="Farrell C."/>
            <person name="Meeh P."/>
            <person name="Markowitz S.D."/>
            <person name="Willis J."/>
            <person name="Dawson D."/>
            <person name="Willson J.K.V."/>
            <person name="Gazdar A.F."/>
            <person name="Hartigan J."/>
            <person name="Wu L."/>
            <person name="Liu C."/>
            <person name="Parmigiani G."/>
            <person name="Park B.H."/>
            <person name="Bachman K.E."/>
            <person name="Papadopoulos N."/>
            <person name="Vogelstein B."/>
            <person name="Kinzler K.W."/>
            <person name="Velculescu V.E."/>
        </authorList>
    </citation>
    <scope>VARIANT [LARGE SCALE ANALYSIS] GLU-368</scope>
</reference>
<protein>
    <recommendedName>
        <fullName>Pleckstrin homology domain-containing family A member 8</fullName>
        <shortName>PH domain-containing family A member 8</shortName>
    </recommendedName>
    <alternativeName>
        <fullName>Phosphatidylinositol-four-phosphate adapter protein 2</fullName>
        <shortName>FAPP-2</shortName>
        <shortName>Phosphoinositol 4-phosphate adapter protein 2</shortName>
        <shortName>hFAPP2</shortName>
    </alternativeName>
    <alternativeName>
        <fullName>Serologically defined breast cancer antigen NY-BR-86</fullName>
    </alternativeName>
</protein>
<keyword id="KW-0002">3D-structure</keyword>
<keyword id="KW-0025">Alternative splicing</keyword>
<keyword id="KW-0333">Golgi apparatus</keyword>
<keyword id="KW-0445">Lipid transport</keyword>
<keyword id="KW-0446">Lipid-binding</keyword>
<keyword id="KW-0472">Membrane</keyword>
<keyword id="KW-0597">Phosphoprotein</keyword>
<keyword id="KW-0653">Protein transport</keyword>
<keyword id="KW-1267">Proteomics identification</keyword>
<keyword id="KW-1185">Reference proteome</keyword>
<keyword id="KW-0813">Transport</keyword>